<gene>
    <name evidence="1" type="primary">htpX</name>
    <name type="ordered locus">EFER_1245</name>
</gene>
<dbReference type="EC" id="3.4.24.-" evidence="1"/>
<dbReference type="EMBL" id="CU928158">
    <property type="protein sequence ID" value="CAQ88769.1"/>
    <property type="molecule type" value="Genomic_DNA"/>
</dbReference>
<dbReference type="RefSeq" id="WP_000984509.1">
    <property type="nucleotide sequence ID" value="NC_011740.1"/>
</dbReference>
<dbReference type="SMR" id="B7LPL6"/>
<dbReference type="MEROPS" id="M48.002"/>
<dbReference type="GeneID" id="75057708"/>
<dbReference type="KEGG" id="efe:EFER_1245"/>
<dbReference type="HOGENOM" id="CLU_042266_1_0_6"/>
<dbReference type="OrthoDB" id="15218at2"/>
<dbReference type="Proteomes" id="UP000000745">
    <property type="component" value="Chromosome"/>
</dbReference>
<dbReference type="GO" id="GO:0005886">
    <property type="term" value="C:plasma membrane"/>
    <property type="evidence" value="ECO:0007669"/>
    <property type="project" value="UniProtKB-SubCell"/>
</dbReference>
<dbReference type="GO" id="GO:0004222">
    <property type="term" value="F:metalloendopeptidase activity"/>
    <property type="evidence" value="ECO:0007669"/>
    <property type="project" value="UniProtKB-UniRule"/>
</dbReference>
<dbReference type="GO" id="GO:0008270">
    <property type="term" value="F:zinc ion binding"/>
    <property type="evidence" value="ECO:0007669"/>
    <property type="project" value="UniProtKB-UniRule"/>
</dbReference>
<dbReference type="GO" id="GO:0006508">
    <property type="term" value="P:proteolysis"/>
    <property type="evidence" value="ECO:0007669"/>
    <property type="project" value="UniProtKB-KW"/>
</dbReference>
<dbReference type="CDD" id="cd07335">
    <property type="entry name" value="M48B_HtpX_like"/>
    <property type="match status" value="1"/>
</dbReference>
<dbReference type="FunFam" id="3.30.2010.10:FF:000001">
    <property type="entry name" value="Protease HtpX"/>
    <property type="match status" value="1"/>
</dbReference>
<dbReference type="Gene3D" id="3.30.2010.10">
    <property type="entry name" value="Metalloproteases ('zincins'), catalytic domain"/>
    <property type="match status" value="1"/>
</dbReference>
<dbReference type="HAMAP" id="MF_00188">
    <property type="entry name" value="Pept_M48_protease_HtpX"/>
    <property type="match status" value="1"/>
</dbReference>
<dbReference type="InterPro" id="IPR050083">
    <property type="entry name" value="HtpX_protease"/>
</dbReference>
<dbReference type="InterPro" id="IPR022919">
    <property type="entry name" value="Pept_M48_protease_HtpX"/>
</dbReference>
<dbReference type="InterPro" id="IPR001915">
    <property type="entry name" value="Peptidase_M48"/>
</dbReference>
<dbReference type="NCBIfam" id="NF003965">
    <property type="entry name" value="PRK05457.1"/>
    <property type="match status" value="1"/>
</dbReference>
<dbReference type="PANTHER" id="PTHR43221">
    <property type="entry name" value="PROTEASE HTPX"/>
    <property type="match status" value="1"/>
</dbReference>
<dbReference type="PANTHER" id="PTHR43221:SF1">
    <property type="entry name" value="PROTEASE HTPX"/>
    <property type="match status" value="1"/>
</dbReference>
<dbReference type="Pfam" id="PF01435">
    <property type="entry name" value="Peptidase_M48"/>
    <property type="match status" value="1"/>
</dbReference>
<accession>B7LPL6</accession>
<sequence length="293" mass="31943">MMRIALFLLTNLAVMVVFGLVLSLTGIQSSSVQGLMIMALLFGFGGSFVSLLMSKWMALRSVGGEVIEQPRNERERWLVNTVATQARQAGIAMPQVAIYHAPDINAFATGARRDASLVAVSTGLLQNMSPDEAEAVIAHEISHIANGDMVTMTLIQGVVNTFVIFISRILAQLAAGFMGGNRDDGEESNGNPLIYFAVATVLELVFGILASIITMWFSRHREFHADAGSAKLVGREKMIAALQRLKTSYEPQEATSMMAFCINGKSKSLSELFMTHPPLDKRIEALRTGEYLK</sequence>
<reference key="1">
    <citation type="journal article" date="2009" name="PLoS Genet.">
        <title>Organised genome dynamics in the Escherichia coli species results in highly diverse adaptive paths.</title>
        <authorList>
            <person name="Touchon M."/>
            <person name="Hoede C."/>
            <person name="Tenaillon O."/>
            <person name="Barbe V."/>
            <person name="Baeriswyl S."/>
            <person name="Bidet P."/>
            <person name="Bingen E."/>
            <person name="Bonacorsi S."/>
            <person name="Bouchier C."/>
            <person name="Bouvet O."/>
            <person name="Calteau A."/>
            <person name="Chiapello H."/>
            <person name="Clermont O."/>
            <person name="Cruveiller S."/>
            <person name="Danchin A."/>
            <person name="Diard M."/>
            <person name="Dossat C."/>
            <person name="Karoui M.E."/>
            <person name="Frapy E."/>
            <person name="Garry L."/>
            <person name="Ghigo J.M."/>
            <person name="Gilles A.M."/>
            <person name="Johnson J."/>
            <person name="Le Bouguenec C."/>
            <person name="Lescat M."/>
            <person name="Mangenot S."/>
            <person name="Martinez-Jehanne V."/>
            <person name="Matic I."/>
            <person name="Nassif X."/>
            <person name="Oztas S."/>
            <person name="Petit M.A."/>
            <person name="Pichon C."/>
            <person name="Rouy Z."/>
            <person name="Ruf C.S."/>
            <person name="Schneider D."/>
            <person name="Tourret J."/>
            <person name="Vacherie B."/>
            <person name="Vallenet D."/>
            <person name="Medigue C."/>
            <person name="Rocha E.P.C."/>
            <person name="Denamur E."/>
        </authorList>
    </citation>
    <scope>NUCLEOTIDE SEQUENCE [LARGE SCALE GENOMIC DNA]</scope>
    <source>
        <strain>ATCC 35469 / DSM 13698 / BCRC 15582 / CCUG 18766 / IAM 14443 / JCM 21226 / LMG 7866 / NBRC 102419 / NCTC 12128 / CDC 0568-73</strain>
    </source>
</reference>
<evidence type="ECO:0000255" key="1">
    <source>
        <dbReference type="HAMAP-Rule" id="MF_00188"/>
    </source>
</evidence>
<organism>
    <name type="scientific">Escherichia fergusonii (strain ATCC 35469 / DSM 13698 / CCUG 18766 / IAM 14443 / JCM 21226 / LMG 7866 / NBRC 102419 / NCTC 12128 / CDC 0568-73)</name>
    <dbReference type="NCBI Taxonomy" id="585054"/>
    <lineage>
        <taxon>Bacteria</taxon>
        <taxon>Pseudomonadati</taxon>
        <taxon>Pseudomonadota</taxon>
        <taxon>Gammaproteobacteria</taxon>
        <taxon>Enterobacterales</taxon>
        <taxon>Enterobacteriaceae</taxon>
        <taxon>Escherichia</taxon>
    </lineage>
</organism>
<comment type="cofactor">
    <cofactor evidence="1">
        <name>Zn(2+)</name>
        <dbReference type="ChEBI" id="CHEBI:29105"/>
    </cofactor>
    <text evidence="1">Binds 1 zinc ion per subunit.</text>
</comment>
<comment type="subcellular location">
    <subcellularLocation>
        <location evidence="1">Cell inner membrane</location>
        <topology evidence="1">Multi-pass membrane protein</topology>
    </subcellularLocation>
</comment>
<comment type="similarity">
    <text evidence="1">Belongs to the peptidase M48B family.</text>
</comment>
<proteinExistence type="inferred from homology"/>
<name>HTPX_ESCF3</name>
<keyword id="KW-0997">Cell inner membrane</keyword>
<keyword id="KW-1003">Cell membrane</keyword>
<keyword id="KW-0378">Hydrolase</keyword>
<keyword id="KW-0472">Membrane</keyword>
<keyword id="KW-0479">Metal-binding</keyword>
<keyword id="KW-0482">Metalloprotease</keyword>
<keyword id="KW-0645">Protease</keyword>
<keyword id="KW-0812">Transmembrane</keyword>
<keyword id="KW-1133">Transmembrane helix</keyword>
<keyword id="KW-0862">Zinc</keyword>
<protein>
    <recommendedName>
        <fullName evidence="1">Protease HtpX</fullName>
        <ecNumber evidence="1">3.4.24.-</ecNumber>
    </recommendedName>
    <alternativeName>
        <fullName evidence="1">Heat shock protein HtpX</fullName>
    </alternativeName>
</protein>
<feature type="chain" id="PRO_1000192743" description="Protease HtpX">
    <location>
        <begin position="1"/>
        <end position="293"/>
    </location>
</feature>
<feature type="transmembrane region" description="Helical" evidence="1">
    <location>
        <begin position="4"/>
        <end position="24"/>
    </location>
</feature>
<feature type="transmembrane region" description="Helical" evidence="1">
    <location>
        <begin position="34"/>
        <end position="54"/>
    </location>
</feature>
<feature type="transmembrane region" description="Helical" evidence="1">
    <location>
        <begin position="158"/>
        <end position="178"/>
    </location>
</feature>
<feature type="transmembrane region" description="Helical" evidence="1">
    <location>
        <begin position="193"/>
        <end position="213"/>
    </location>
</feature>
<feature type="active site" evidence="1">
    <location>
        <position position="140"/>
    </location>
</feature>
<feature type="binding site" evidence="1">
    <location>
        <position position="139"/>
    </location>
    <ligand>
        <name>Zn(2+)</name>
        <dbReference type="ChEBI" id="CHEBI:29105"/>
        <note>catalytic</note>
    </ligand>
</feature>
<feature type="binding site" evidence="1">
    <location>
        <position position="143"/>
    </location>
    <ligand>
        <name>Zn(2+)</name>
        <dbReference type="ChEBI" id="CHEBI:29105"/>
        <note>catalytic</note>
    </ligand>
</feature>
<feature type="binding site" evidence="1">
    <location>
        <position position="222"/>
    </location>
    <ligand>
        <name>Zn(2+)</name>
        <dbReference type="ChEBI" id="CHEBI:29105"/>
        <note>catalytic</note>
    </ligand>
</feature>